<feature type="signal peptide" evidence="2">
    <location>
        <begin position="1"/>
        <end position="19"/>
    </location>
</feature>
<feature type="propeptide" id="PRO_0000407018" evidence="1">
    <location>
        <begin position="20"/>
        <end position="117"/>
    </location>
</feature>
<feature type="chain" id="PRO_0000407019" description="Subtilisin-like protease CPC735_050320">
    <location>
        <begin position="118"/>
        <end position="398"/>
    </location>
</feature>
<feature type="domain" description="Inhibitor I9" evidence="2">
    <location>
        <begin position="35"/>
        <end position="115"/>
    </location>
</feature>
<feature type="domain" description="Peptidase S8" evidence="3">
    <location>
        <begin position="127"/>
        <end position="398"/>
    </location>
</feature>
<feature type="active site" description="Charge relay system" evidence="3">
    <location>
        <position position="159"/>
    </location>
</feature>
<feature type="active site" description="Charge relay system" evidence="3">
    <location>
        <position position="190"/>
    </location>
</feature>
<feature type="active site" description="Charge relay system" evidence="3">
    <location>
        <position position="344"/>
    </location>
</feature>
<feature type="glycosylation site" description="N-linked (GlcNAc...) asparagine" evidence="2">
    <location>
        <position position="220"/>
    </location>
</feature>
<feature type="glycosylation site" description="N-linked (GlcNAc...) asparagine" evidence="2">
    <location>
        <position position="250"/>
    </location>
</feature>
<name>SUB7A_COCP7</name>
<keyword id="KW-0325">Glycoprotein</keyword>
<keyword id="KW-0378">Hydrolase</keyword>
<keyword id="KW-0645">Protease</keyword>
<keyword id="KW-0964">Secreted</keyword>
<keyword id="KW-0720">Serine protease</keyword>
<keyword id="KW-0732">Signal</keyword>
<keyword id="KW-0843">Virulence</keyword>
<keyword id="KW-0865">Zymogen</keyword>
<gene>
    <name type="ORF">CPC735_050320</name>
</gene>
<accession>C5PGK9</accession>
<reference key="1">
    <citation type="journal article" date="2009" name="Genome Res.">
        <title>Comparative genomic analyses of the human fungal pathogens Coccidioides and their relatives.</title>
        <authorList>
            <person name="Sharpton T.J."/>
            <person name="Stajich J.E."/>
            <person name="Rounsley S.D."/>
            <person name="Gardner M.J."/>
            <person name="Wortman J.R."/>
            <person name="Jordar V.S."/>
            <person name="Maiti R."/>
            <person name="Kodira C.D."/>
            <person name="Neafsey D.E."/>
            <person name="Zeng Q."/>
            <person name="Hung C.-Y."/>
            <person name="McMahan C."/>
            <person name="Muszewska A."/>
            <person name="Grynberg M."/>
            <person name="Mandel M.A."/>
            <person name="Kellner E.M."/>
            <person name="Barker B.M."/>
            <person name="Galgiani J.N."/>
            <person name="Orbach M.J."/>
            <person name="Kirkland T.N."/>
            <person name="Cole G.T."/>
            <person name="Henn M.R."/>
            <person name="Birren B.W."/>
            <person name="Taylor J.W."/>
        </authorList>
    </citation>
    <scope>NUCLEOTIDE SEQUENCE [LARGE SCALE GENOMIC DNA]</scope>
    <source>
        <strain>C735</strain>
    </source>
</reference>
<proteinExistence type="inferred from homology"/>
<sequence>MVFLGKILPLALAALSVNGAEILSAPGAENIPNGYIVVMKEGTSTQDFDAHREWVASVHHERLARRGSTNVGGMRHTYNFNQGFMGYAGTFDEETIQEIANRDDVAYIERDQIMKASAIQTQRNVPSWGLARVSSRQPGGRDYSYDSTAGQGVTAYIIDTGIDIRHTDFGGRAVWGTNTVDRRNEDCNGHGTHVAGTTGGTSFGVAKRARLVAVKVLDCNGSGSNSAVIAGMQWAMQHASQNDPRRAVANMSLGGGYSQASNQAAAAIVRAGIFLAVAAGNDNRDARSFSPASEPTVCTAAASHVRDGKASFSNWGQLVDVYAPGQDIISARPGGGSRSLSGTSMASPHVCGLGAYLIGLGRGSGGGLCDTIKRMALPVISNPGSGTTNRLINNGVSQ</sequence>
<protein>
    <recommendedName>
        <fullName>Subtilisin-like protease CPC735_050320</fullName>
        <ecNumber>3.4.21.-</ecNumber>
    </recommendedName>
</protein>
<comment type="function">
    <text evidence="1">Secreted subtilisin-like serine protease with keratinolytic activity that contributes to pathogenicity.</text>
</comment>
<comment type="subcellular location">
    <subcellularLocation>
        <location evidence="1">Secreted</location>
    </subcellularLocation>
</comment>
<comment type="similarity">
    <text evidence="4">Belongs to the peptidase S8 family.</text>
</comment>
<organism>
    <name type="scientific">Coccidioides posadasii (strain C735)</name>
    <name type="common">Valley fever fungus</name>
    <dbReference type="NCBI Taxonomy" id="222929"/>
    <lineage>
        <taxon>Eukaryota</taxon>
        <taxon>Fungi</taxon>
        <taxon>Dikarya</taxon>
        <taxon>Ascomycota</taxon>
        <taxon>Pezizomycotina</taxon>
        <taxon>Eurotiomycetes</taxon>
        <taxon>Eurotiomycetidae</taxon>
        <taxon>Onygenales</taxon>
        <taxon>Onygenaceae</taxon>
        <taxon>Coccidioides</taxon>
    </lineage>
</organism>
<dbReference type="EC" id="3.4.21.-"/>
<dbReference type="EMBL" id="ACFW01000049">
    <property type="protein sequence ID" value="EER23662.1"/>
    <property type="molecule type" value="Genomic_DNA"/>
</dbReference>
<dbReference type="SMR" id="C5PGK9"/>
<dbReference type="KEGG" id="cpw:9691277"/>
<dbReference type="VEuPathDB" id="FungiDB:CPC735_050320"/>
<dbReference type="HOGENOM" id="CLU_011263_1_3_1"/>
<dbReference type="OrthoDB" id="206201at2759"/>
<dbReference type="Proteomes" id="UP000009084">
    <property type="component" value="Unassembled WGS sequence"/>
</dbReference>
<dbReference type="GO" id="GO:0005576">
    <property type="term" value="C:extracellular region"/>
    <property type="evidence" value="ECO:0007669"/>
    <property type="project" value="UniProtKB-SubCell"/>
</dbReference>
<dbReference type="GO" id="GO:0004252">
    <property type="term" value="F:serine-type endopeptidase activity"/>
    <property type="evidence" value="ECO:0007669"/>
    <property type="project" value="InterPro"/>
</dbReference>
<dbReference type="GO" id="GO:0006508">
    <property type="term" value="P:proteolysis"/>
    <property type="evidence" value="ECO:0007669"/>
    <property type="project" value="UniProtKB-KW"/>
</dbReference>
<dbReference type="CDD" id="cd04077">
    <property type="entry name" value="Peptidases_S8_PCSK9_ProteinaseK_like"/>
    <property type="match status" value="1"/>
</dbReference>
<dbReference type="FunFam" id="3.40.50.200:FF:000014">
    <property type="entry name" value="Proteinase K"/>
    <property type="match status" value="1"/>
</dbReference>
<dbReference type="Gene3D" id="3.30.70.80">
    <property type="entry name" value="Peptidase S8 propeptide/proteinase inhibitor I9"/>
    <property type="match status" value="1"/>
</dbReference>
<dbReference type="Gene3D" id="3.40.50.200">
    <property type="entry name" value="Peptidase S8/S53 domain"/>
    <property type="match status" value="1"/>
</dbReference>
<dbReference type="InterPro" id="IPR034193">
    <property type="entry name" value="PCSK9_ProteinaseK-like"/>
</dbReference>
<dbReference type="InterPro" id="IPR000209">
    <property type="entry name" value="Peptidase_S8/S53_dom"/>
</dbReference>
<dbReference type="InterPro" id="IPR036852">
    <property type="entry name" value="Peptidase_S8/S53_dom_sf"/>
</dbReference>
<dbReference type="InterPro" id="IPR023827">
    <property type="entry name" value="Peptidase_S8_Asp-AS"/>
</dbReference>
<dbReference type="InterPro" id="IPR023828">
    <property type="entry name" value="Peptidase_S8_Ser-AS"/>
</dbReference>
<dbReference type="InterPro" id="IPR050131">
    <property type="entry name" value="Peptidase_S8_subtilisin-like"/>
</dbReference>
<dbReference type="InterPro" id="IPR015500">
    <property type="entry name" value="Peptidase_S8_subtilisin-rel"/>
</dbReference>
<dbReference type="InterPro" id="IPR010259">
    <property type="entry name" value="S8pro/Inhibitor_I9"/>
</dbReference>
<dbReference type="InterPro" id="IPR037045">
    <property type="entry name" value="S8pro/Inhibitor_I9_sf"/>
</dbReference>
<dbReference type="PANTHER" id="PTHR43806:SF11">
    <property type="entry name" value="CEREVISIN-RELATED"/>
    <property type="match status" value="1"/>
</dbReference>
<dbReference type="PANTHER" id="PTHR43806">
    <property type="entry name" value="PEPTIDASE S8"/>
    <property type="match status" value="1"/>
</dbReference>
<dbReference type="Pfam" id="PF05922">
    <property type="entry name" value="Inhibitor_I9"/>
    <property type="match status" value="1"/>
</dbReference>
<dbReference type="Pfam" id="PF00082">
    <property type="entry name" value="Peptidase_S8"/>
    <property type="match status" value="1"/>
</dbReference>
<dbReference type="PRINTS" id="PR00723">
    <property type="entry name" value="SUBTILISIN"/>
</dbReference>
<dbReference type="SUPFAM" id="SSF54897">
    <property type="entry name" value="Protease propeptides/inhibitors"/>
    <property type="match status" value="1"/>
</dbReference>
<dbReference type="SUPFAM" id="SSF52743">
    <property type="entry name" value="Subtilisin-like"/>
    <property type="match status" value="1"/>
</dbReference>
<dbReference type="PROSITE" id="PS51892">
    <property type="entry name" value="SUBTILASE"/>
    <property type="match status" value="1"/>
</dbReference>
<dbReference type="PROSITE" id="PS00136">
    <property type="entry name" value="SUBTILASE_ASP"/>
    <property type="match status" value="1"/>
</dbReference>
<dbReference type="PROSITE" id="PS00138">
    <property type="entry name" value="SUBTILASE_SER"/>
    <property type="match status" value="1"/>
</dbReference>
<evidence type="ECO:0000250" key="1"/>
<evidence type="ECO:0000255" key="2"/>
<evidence type="ECO:0000255" key="3">
    <source>
        <dbReference type="PROSITE-ProRule" id="PRU01240"/>
    </source>
</evidence>
<evidence type="ECO:0000305" key="4"/>